<dbReference type="EC" id="3.6.4.13"/>
<dbReference type="EMBL" id="AAFW02000099">
    <property type="protein sequence ID" value="EDN61953.1"/>
    <property type="molecule type" value="Genomic_DNA"/>
</dbReference>
<dbReference type="SMR" id="A6ZU15"/>
<dbReference type="HOGENOM" id="CLU_003041_1_4_1"/>
<dbReference type="Proteomes" id="UP000007060">
    <property type="component" value="Unassembled WGS sequence"/>
</dbReference>
<dbReference type="GO" id="GO:0005829">
    <property type="term" value="C:cytosol"/>
    <property type="evidence" value="ECO:0007669"/>
    <property type="project" value="TreeGrafter"/>
</dbReference>
<dbReference type="GO" id="GO:0005730">
    <property type="term" value="C:nucleolus"/>
    <property type="evidence" value="ECO:0007669"/>
    <property type="project" value="UniProtKB-SubCell"/>
</dbReference>
<dbReference type="GO" id="GO:0005524">
    <property type="term" value="F:ATP binding"/>
    <property type="evidence" value="ECO:0007669"/>
    <property type="project" value="UniProtKB-KW"/>
</dbReference>
<dbReference type="GO" id="GO:0016887">
    <property type="term" value="F:ATP hydrolysis activity"/>
    <property type="evidence" value="ECO:0007669"/>
    <property type="project" value="RHEA"/>
</dbReference>
<dbReference type="GO" id="GO:0003723">
    <property type="term" value="F:RNA binding"/>
    <property type="evidence" value="ECO:0007669"/>
    <property type="project" value="UniProtKB-KW"/>
</dbReference>
<dbReference type="GO" id="GO:0003724">
    <property type="term" value="F:RNA helicase activity"/>
    <property type="evidence" value="ECO:0007669"/>
    <property type="project" value="UniProtKB-EC"/>
</dbReference>
<dbReference type="GO" id="GO:0030490">
    <property type="term" value="P:maturation of SSU-rRNA"/>
    <property type="evidence" value="ECO:0007669"/>
    <property type="project" value="InterPro"/>
</dbReference>
<dbReference type="CDD" id="cd17957">
    <property type="entry name" value="DEADc_DDX52"/>
    <property type="match status" value="1"/>
</dbReference>
<dbReference type="CDD" id="cd18787">
    <property type="entry name" value="SF2_C_DEAD"/>
    <property type="match status" value="1"/>
</dbReference>
<dbReference type="FunFam" id="3.40.50.300:FF:000759">
    <property type="entry name" value="probable ATP-dependent RNA helicase DDX52"/>
    <property type="match status" value="1"/>
</dbReference>
<dbReference type="FunFam" id="3.40.50.300:FF:002420">
    <property type="entry name" value="ROK1p RNA-dependent ATPase"/>
    <property type="match status" value="1"/>
</dbReference>
<dbReference type="Gene3D" id="3.40.50.300">
    <property type="entry name" value="P-loop containing nucleotide triphosphate hydrolases"/>
    <property type="match status" value="2"/>
</dbReference>
<dbReference type="InterPro" id="IPR044764">
    <property type="entry name" value="DDX52/Rok1_DEADc"/>
</dbReference>
<dbReference type="InterPro" id="IPR011545">
    <property type="entry name" value="DEAD/DEAH_box_helicase_dom"/>
</dbReference>
<dbReference type="InterPro" id="IPR050079">
    <property type="entry name" value="DEAD_box_RNA_helicase"/>
</dbReference>
<dbReference type="InterPro" id="IPR014001">
    <property type="entry name" value="Helicase_ATP-bd"/>
</dbReference>
<dbReference type="InterPro" id="IPR001650">
    <property type="entry name" value="Helicase_C-like"/>
</dbReference>
<dbReference type="InterPro" id="IPR027417">
    <property type="entry name" value="P-loop_NTPase"/>
</dbReference>
<dbReference type="InterPro" id="IPR000629">
    <property type="entry name" value="RNA-helicase_DEAD-box_CS"/>
</dbReference>
<dbReference type="InterPro" id="IPR014014">
    <property type="entry name" value="RNA_helicase_DEAD_Q_motif"/>
</dbReference>
<dbReference type="PANTHER" id="PTHR47959">
    <property type="entry name" value="ATP-DEPENDENT RNA HELICASE RHLE-RELATED"/>
    <property type="match status" value="1"/>
</dbReference>
<dbReference type="PANTHER" id="PTHR47959:SF15">
    <property type="entry name" value="RNA HELICASE"/>
    <property type="match status" value="1"/>
</dbReference>
<dbReference type="Pfam" id="PF00270">
    <property type="entry name" value="DEAD"/>
    <property type="match status" value="1"/>
</dbReference>
<dbReference type="Pfam" id="PF00271">
    <property type="entry name" value="Helicase_C"/>
    <property type="match status" value="1"/>
</dbReference>
<dbReference type="SMART" id="SM00487">
    <property type="entry name" value="DEXDc"/>
    <property type="match status" value="1"/>
</dbReference>
<dbReference type="SMART" id="SM00490">
    <property type="entry name" value="HELICc"/>
    <property type="match status" value="1"/>
</dbReference>
<dbReference type="SUPFAM" id="SSF52540">
    <property type="entry name" value="P-loop containing nucleoside triphosphate hydrolases"/>
    <property type="match status" value="1"/>
</dbReference>
<dbReference type="PROSITE" id="PS00039">
    <property type="entry name" value="DEAD_ATP_HELICASE"/>
    <property type="match status" value="1"/>
</dbReference>
<dbReference type="PROSITE" id="PS51192">
    <property type="entry name" value="HELICASE_ATP_BIND_1"/>
    <property type="match status" value="1"/>
</dbReference>
<dbReference type="PROSITE" id="PS51194">
    <property type="entry name" value="HELICASE_CTER"/>
    <property type="match status" value="1"/>
</dbReference>
<dbReference type="PROSITE" id="PS51195">
    <property type="entry name" value="Q_MOTIF"/>
    <property type="match status" value="1"/>
</dbReference>
<accession>A6ZU15</accession>
<sequence>MDIFRVLTRGASVKKESGPKAKAADYSVINGKDENHKEDNNESQIVKELDFFRNKRIISKVEDDREKTTENDSPNKEEKSGNDDGLIKPVITNTVEASALRKSYKGNVSGIDIPLPIGSFEDLISRFSFDRRLLNNLIENGFTEPTPIQCECIPVALNNRDVLACGPTGSGKTLAFLIPLVQQIIDDKQTAGLKGLIISPTKELANQIFIECFKLSHKIFLEKKRPLQVALLSKSLGAKLKNKVVSDKKYDIIISTPLRLIDVVKNEALDLSKVKHLIFDEADKLFDKTFVEQSDDILSACREPSLRKAMFSATIPSNVEEIAQSIMMDPVRVIIGHKEAANTNIEQKLIFCGNEEGKLIAIRQLVQEGEFKPPIIIFLESITRAKALYHELMYDRINVDVIHAERTALQRDRIIERFKTGELWCLICTDVLARGIDFKGVNLVINYDVPGSSQAYVHRIGRTGRGGRSGKAITFYTKQDSVAIKPIINVMKQSGCEVSEWMDKMAKMTRKEKESIKNGKAHKERKQITTVPKMDKAKRRRQQEMIAASKRRKNEELSKKHFSK</sequence>
<proteinExistence type="inferred from homology"/>
<keyword id="KW-0067">ATP-binding</keyword>
<keyword id="KW-0347">Helicase</keyword>
<keyword id="KW-0378">Hydrolase</keyword>
<keyword id="KW-0547">Nucleotide-binding</keyword>
<keyword id="KW-0539">Nucleus</keyword>
<keyword id="KW-0690">Ribosome biogenesis</keyword>
<keyword id="KW-0694">RNA-binding</keyword>
<keyword id="KW-0698">rRNA processing</keyword>
<comment type="function">
    <text>ATP-dependent RNA helicase involved in 40S ribosomal subunit biogenesis. Required for the processing and cleavage of 35S pre-rRNA at sites A0, A1, and A2, leading to mature 18S rRNA.</text>
</comment>
<comment type="catalytic activity">
    <reaction>
        <text>ATP + H2O = ADP + phosphate + H(+)</text>
        <dbReference type="Rhea" id="RHEA:13065"/>
        <dbReference type="ChEBI" id="CHEBI:15377"/>
        <dbReference type="ChEBI" id="CHEBI:15378"/>
        <dbReference type="ChEBI" id="CHEBI:30616"/>
        <dbReference type="ChEBI" id="CHEBI:43474"/>
        <dbReference type="ChEBI" id="CHEBI:456216"/>
        <dbReference type="EC" id="3.6.4.13"/>
    </reaction>
</comment>
<comment type="subunit">
    <text evidence="1">Interacts with the U3 snoRNA and is associated with the 90S and 40S pre-ribosomes. This association requires the presence of RRP5. Also interacts with OSH3 (By similarity).</text>
</comment>
<comment type="subcellular location">
    <subcellularLocation>
        <location evidence="1">Nucleus</location>
        <location evidence="1">Nucleolus</location>
    </subcellularLocation>
</comment>
<comment type="domain">
    <text>The Q motif is unique to and characteristic of the DEAD box family of RNA helicases and controls ATP binding and hydrolysis.</text>
</comment>
<comment type="similarity">
    <text evidence="5">Belongs to the DEAD box helicase family. DDX52/ROK1 subfamily.</text>
</comment>
<organism>
    <name type="scientific">Saccharomyces cerevisiae (strain YJM789)</name>
    <name type="common">Baker's yeast</name>
    <dbReference type="NCBI Taxonomy" id="307796"/>
    <lineage>
        <taxon>Eukaryota</taxon>
        <taxon>Fungi</taxon>
        <taxon>Dikarya</taxon>
        <taxon>Ascomycota</taxon>
        <taxon>Saccharomycotina</taxon>
        <taxon>Saccharomycetes</taxon>
        <taxon>Saccharomycetales</taxon>
        <taxon>Saccharomycetaceae</taxon>
        <taxon>Saccharomyces</taxon>
    </lineage>
</organism>
<protein>
    <recommendedName>
        <fullName>ATP-dependent RNA helicase ROK1</fullName>
        <ecNumber>3.6.4.13</ecNumber>
    </recommendedName>
    <alternativeName>
        <fullName>Rescuer of KEM1 protein 1</fullName>
    </alternativeName>
</protein>
<name>ROK1_YEAS7</name>
<feature type="chain" id="PRO_0000310242" description="ATP-dependent RNA helicase ROK1">
    <location>
        <begin position="1"/>
        <end position="564"/>
    </location>
</feature>
<feature type="domain" description="Helicase ATP-binding" evidence="2">
    <location>
        <begin position="153"/>
        <end position="333"/>
    </location>
</feature>
<feature type="domain" description="Helicase C-terminal" evidence="3">
    <location>
        <begin position="344"/>
        <end position="506"/>
    </location>
</feature>
<feature type="region of interest" description="Disordered" evidence="4">
    <location>
        <begin position="1"/>
        <end position="25"/>
    </location>
</feature>
<feature type="region of interest" description="Disordered" evidence="4">
    <location>
        <begin position="62"/>
        <end position="87"/>
    </location>
</feature>
<feature type="region of interest" description="Disordered" evidence="4">
    <location>
        <begin position="512"/>
        <end position="564"/>
    </location>
</feature>
<feature type="short sequence motif" description="Q motif">
    <location>
        <begin position="122"/>
        <end position="150"/>
    </location>
</feature>
<feature type="short sequence motif" description="DEAD box">
    <location>
        <begin position="280"/>
        <end position="283"/>
    </location>
</feature>
<feature type="compositionally biased region" description="Basic and acidic residues" evidence="4">
    <location>
        <begin position="13"/>
        <end position="23"/>
    </location>
</feature>
<feature type="compositionally biased region" description="Basic and acidic residues" evidence="4">
    <location>
        <begin position="62"/>
        <end position="86"/>
    </location>
</feature>
<feature type="compositionally biased region" description="Basic and acidic residues" evidence="4">
    <location>
        <begin position="553"/>
        <end position="564"/>
    </location>
</feature>
<feature type="binding site" evidence="2">
    <location>
        <begin position="166"/>
        <end position="173"/>
    </location>
    <ligand>
        <name>ATP</name>
        <dbReference type="ChEBI" id="CHEBI:30616"/>
    </ligand>
</feature>
<reference key="1">
    <citation type="journal article" date="2007" name="Proc. Natl. Acad. Sci. U.S.A.">
        <title>Genome sequencing and comparative analysis of Saccharomyces cerevisiae strain YJM789.</title>
        <authorList>
            <person name="Wei W."/>
            <person name="McCusker J.H."/>
            <person name="Hyman R.W."/>
            <person name="Jones T."/>
            <person name="Ning Y."/>
            <person name="Cao Z."/>
            <person name="Gu Z."/>
            <person name="Bruno D."/>
            <person name="Miranda M."/>
            <person name="Nguyen M."/>
            <person name="Wilhelmy J."/>
            <person name="Komp C."/>
            <person name="Tamse R."/>
            <person name="Wang X."/>
            <person name="Jia P."/>
            <person name="Luedi P."/>
            <person name="Oefner P.J."/>
            <person name="David L."/>
            <person name="Dietrich F.S."/>
            <person name="Li Y."/>
            <person name="Davis R.W."/>
            <person name="Steinmetz L.M."/>
        </authorList>
    </citation>
    <scope>NUCLEOTIDE SEQUENCE [LARGE SCALE GENOMIC DNA]</scope>
    <source>
        <strain>YJM789</strain>
    </source>
</reference>
<evidence type="ECO:0000250" key="1"/>
<evidence type="ECO:0000255" key="2">
    <source>
        <dbReference type="PROSITE-ProRule" id="PRU00541"/>
    </source>
</evidence>
<evidence type="ECO:0000255" key="3">
    <source>
        <dbReference type="PROSITE-ProRule" id="PRU00542"/>
    </source>
</evidence>
<evidence type="ECO:0000256" key="4">
    <source>
        <dbReference type="SAM" id="MobiDB-lite"/>
    </source>
</evidence>
<evidence type="ECO:0000305" key="5"/>
<gene>
    <name type="primary">ROK1</name>
    <name type="ORF">SCY_1898</name>
</gene>